<dbReference type="EC" id="5.2.1.8" evidence="1"/>
<dbReference type="EMBL" id="CP000124">
    <property type="protein sequence ID" value="ABA48931.1"/>
    <property type="molecule type" value="Genomic_DNA"/>
</dbReference>
<dbReference type="RefSeq" id="WP_004522795.1">
    <property type="nucleotide sequence ID" value="NC_007434.1"/>
</dbReference>
<dbReference type="SMR" id="Q3JVW8"/>
<dbReference type="EnsemblBacteria" id="ABA48931">
    <property type="protein sequence ID" value="ABA48931"/>
    <property type="gene ID" value="BURPS1710b_0872"/>
</dbReference>
<dbReference type="KEGG" id="bpm:BURPS1710b_0872"/>
<dbReference type="HOGENOM" id="CLU_034646_11_0_4"/>
<dbReference type="Proteomes" id="UP000002700">
    <property type="component" value="Chromosome I"/>
</dbReference>
<dbReference type="GO" id="GO:0030288">
    <property type="term" value="C:outer membrane-bounded periplasmic space"/>
    <property type="evidence" value="ECO:0007669"/>
    <property type="project" value="InterPro"/>
</dbReference>
<dbReference type="GO" id="GO:0042277">
    <property type="term" value="F:peptide binding"/>
    <property type="evidence" value="ECO:0007669"/>
    <property type="project" value="InterPro"/>
</dbReference>
<dbReference type="GO" id="GO:0003755">
    <property type="term" value="F:peptidyl-prolyl cis-trans isomerase activity"/>
    <property type="evidence" value="ECO:0007669"/>
    <property type="project" value="UniProtKB-UniRule"/>
</dbReference>
<dbReference type="GO" id="GO:0051082">
    <property type="term" value="F:unfolded protein binding"/>
    <property type="evidence" value="ECO:0007669"/>
    <property type="project" value="UniProtKB-UniRule"/>
</dbReference>
<dbReference type="GO" id="GO:0043165">
    <property type="term" value="P:Gram-negative-bacterium-type cell outer membrane assembly"/>
    <property type="evidence" value="ECO:0007669"/>
    <property type="project" value="InterPro"/>
</dbReference>
<dbReference type="GO" id="GO:0006457">
    <property type="term" value="P:protein folding"/>
    <property type="evidence" value="ECO:0007669"/>
    <property type="project" value="UniProtKB-UniRule"/>
</dbReference>
<dbReference type="GO" id="GO:0050821">
    <property type="term" value="P:protein stabilization"/>
    <property type="evidence" value="ECO:0007669"/>
    <property type="project" value="InterPro"/>
</dbReference>
<dbReference type="Gene3D" id="3.10.50.40">
    <property type="match status" value="2"/>
</dbReference>
<dbReference type="Gene3D" id="1.10.4030.10">
    <property type="entry name" value="Porin chaperone SurA, peptide-binding domain"/>
    <property type="match status" value="1"/>
</dbReference>
<dbReference type="HAMAP" id="MF_01183">
    <property type="entry name" value="Chaperone_SurA"/>
    <property type="match status" value="1"/>
</dbReference>
<dbReference type="InterPro" id="IPR050280">
    <property type="entry name" value="OMP_Chaperone_SurA"/>
</dbReference>
<dbReference type="InterPro" id="IPR046357">
    <property type="entry name" value="PPIase_dom_sf"/>
</dbReference>
<dbReference type="InterPro" id="IPR000297">
    <property type="entry name" value="PPIase_PpiC"/>
</dbReference>
<dbReference type="InterPro" id="IPR023034">
    <property type="entry name" value="PPIase_SurA"/>
</dbReference>
<dbReference type="InterPro" id="IPR015391">
    <property type="entry name" value="SurA_N"/>
</dbReference>
<dbReference type="InterPro" id="IPR027304">
    <property type="entry name" value="Trigger_fact/SurA_dom_sf"/>
</dbReference>
<dbReference type="PANTHER" id="PTHR47637">
    <property type="entry name" value="CHAPERONE SURA"/>
    <property type="match status" value="1"/>
</dbReference>
<dbReference type="PANTHER" id="PTHR47637:SF1">
    <property type="entry name" value="CHAPERONE SURA"/>
    <property type="match status" value="1"/>
</dbReference>
<dbReference type="Pfam" id="PF00639">
    <property type="entry name" value="Rotamase"/>
    <property type="match status" value="1"/>
</dbReference>
<dbReference type="Pfam" id="PF13616">
    <property type="entry name" value="Rotamase_3"/>
    <property type="match status" value="1"/>
</dbReference>
<dbReference type="Pfam" id="PF09312">
    <property type="entry name" value="SurA_N"/>
    <property type="match status" value="1"/>
</dbReference>
<dbReference type="SUPFAM" id="SSF54534">
    <property type="entry name" value="FKBP-like"/>
    <property type="match status" value="2"/>
</dbReference>
<dbReference type="SUPFAM" id="SSF109998">
    <property type="entry name" value="Triger factor/SurA peptide-binding domain-like"/>
    <property type="match status" value="1"/>
</dbReference>
<dbReference type="PROSITE" id="PS50198">
    <property type="entry name" value="PPIC_PPIASE_2"/>
    <property type="match status" value="2"/>
</dbReference>
<keyword id="KW-0143">Chaperone</keyword>
<keyword id="KW-0413">Isomerase</keyword>
<keyword id="KW-0574">Periplasm</keyword>
<keyword id="KW-0677">Repeat</keyword>
<keyword id="KW-0697">Rotamase</keyword>
<keyword id="KW-0732">Signal</keyword>
<proteinExistence type="inferred from homology"/>
<reference key="1">
    <citation type="journal article" date="2010" name="Genome Biol. Evol.">
        <title>Continuing evolution of Burkholderia mallei through genome reduction and large-scale rearrangements.</title>
        <authorList>
            <person name="Losada L."/>
            <person name="Ronning C.M."/>
            <person name="DeShazer D."/>
            <person name="Woods D."/>
            <person name="Fedorova N."/>
            <person name="Kim H.S."/>
            <person name="Shabalina S.A."/>
            <person name="Pearson T.R."/>
            <person name="Brinkac L."/>
            <person name="Tan P."/>
            <person name="Nandi T."/>
            <person name="Crabtree J."/>
            <person name="Badger J."/>
            <person name="Beckstrom-Sternberg S."/>
            <person name="Saqib M."/>
            <person name="Schutzer S.E."/>
            <person name="Keim P."/>
            <person name="Nierman W.C."/>
        </authorList>
    </citation>
    <scope>NUCLEOTIDE SEQUENCE [LARGE SCALE GENOMIC DNA]</scope>
    <source>
        <strain>1710b</strain>
    </source>
</reference>
<gene>
    <name evidence="1" type="primary">surA</name>
    <name type="ordered locus">BURPS1710b_0872</name>
</gene>
<evidence type="ECO:0000255" key="1">
    <source>
        <dbReference type="HAMAP-Rule" id="MF_01183"/>
    </source>
</evidence>
<protein>
    <recommendedName>
        <fullName evidence="1">Chaperone SurA</fullName>
    </recommendedName>
    <alternativeName>
        <fullName evidence="1">Peptidyl-prolyl cis-trans isomerase SurA</fullName>
        <shortName evidence="1">PPIase SurA</shortName>
        <ecNumber evidence="1">5.2.1.8</ecNumber>
    </alternativeName>
    <alternativeName>
        <fullName evidence="1">Rotamase SurA</fullName>
    </alternativeName>
</protein>
<accession>Q3JVW8</accession>
<organism>
    <name type="scientific">Burkholderia pseudomallei (strain 1710b)</name>
    <dbReference type="NCBI Taxonomy" id="320372"/>
    <lineage>
        <taxon>Bacteria</taxon>
        <taxon>Pseudomonadati</taxon>
        <taxon>Pseudomonadota</taxon>
        <taxon>Betaproteobacteria</taxon>
        <taxon>Burkholderiales</taxon>
        <taxon>Burkholderiaceae</taxon>
        <taxon>Burkholderia</taxon>
        <taxon>pseudomallei group</taxon>
    </lineage>
</organism>
<name>SURA_BURP1</name>
<comment type="function">
    <text evidence="1">Chaperone involved in the correct folding and assembly of outer membrane proteins. Recognizes specific patterns of aromatic residues and the orientation of their side chains, which are found more frequently in integral outer membrane proteins. May act in both early periplasmic and late outer membrane-associated steps of protein maturation.</text>
</comment>
<comment type="catalytic activity">
    <reaction evidence="1">
        <text>[protein]-peptidylproline (omega=180) = [protein]-peptidylproline (omega=0)</text>
        <dbReference type="Rhea" id="RHEA:16237"/>
        <dbReference type="Rhea" id="RHEA-COMP:10747"/>
        <dbReference type="Rhea" id="RHEA-COMP:10748"/>
        <dbReference type="ChEBI" id="CHEBI:83833"/>
        <dbReference type="ChEBI" id="CHEBI:83834"/>
        <dbReference type="EC" id="5.2.1.8"/>
    </reaction>
</comment>
<comment type="subcellular location">
    <subcellularLocation>
        <location evidence="1">Periplasm</location>
    </subcellularLocation>
    <text evidence="1">Is capable of associating with the outer membrane.</text>
</comment>
<comment type="domain">
    <text evidence="1">The PPIase activity resides only in the second parvulin domain. The N-terminal region and the C-terminal tail are necessary and sufficient for the chaperone activity of SurA. The PPIase activity is dispensable for SurA to function as a chaperone. The N-terminal region and the C-terminal tail are also required for porin recognition.</text>
</comment>
<sequence>MKKTLRFAAVASGLVASLITVAPSASAQALRAQGASLADEVVAVVNNDVITGRELDQRVGLIARRLQQQKAPVPPTDQLRAQVLNQMVLERIQVQRAKDDGIVVDNATVQATLGRLAQANGMQLDQYKARIEAQGVPWDLFVRDARTELMLSKLREKEVDSKITVSDAEVASYIASQRGPNAGSQQDLRLEHIFVKAPANAPQADIDVAQKKAEGLLQQALASGANFERLAKNQSEADDAKKGGDLGFKSPASLPSDVVDAVSKLRPGEVNPTLIRVPDGFEIVRLVERRASQNPAASPKIVQTHVRHILLRVGEGKSESQARQQLIDIRRQIESGGDFEKFARTYSQDGSASQGGDLGWISPGETVPEFERAMNTLQDGQVSNPVRTEYGYHLIQVLGRRDAEGSVQQQMDIARQAIGQRKAEQAYSDWLRELRDSSYVQIKLPVAQ</sequence>
<feature type="signal peptide" evidence="1">
    <location>
        <begin position="1"/>
        <end position="27"/>
    </location>
</feature>
<feature type="chain" id="PRO_0000270007" description="Chaperone SurA">
    <location>
        <begin position="28"/>
        <end position="448"/>
    </location>
</feature>
<feature type="domain" description="PpiC 1" evidence="1">
    <location>
        <begin position="185"/>
        <end position="288"/>
    </location>
</feature>
<feature type="domain" description="PpiC 2" evidence="1">
    <location>
        <begin position="301"/>
        <end position="399"/>
    </location>
</feature>